<feature type="chain" id="PRO_0000292135" description="Putative regulatory protein Dvul_2085">
    <location>
        <begin position="1"/>
        <end position="86"/>
    </location>
</feature>
<organism>
    <name type="scientific">Nitratidesulfovibrio vulgaris (strain DP4)</name>
    <name type="common">Desulfovibrio vulgaris</name>
    <dbReference type="NCBI Taxonomy" id="391774"/>
    <lineage>
        <taxon>Bacteria</taxon>
        <taxon>Pseudomonadati</taxon>
        <taxon>Thermodesulfobacteriota</taxon>
        <taxon>Desulfovibrionia</taxon>
        <taxon>Desulfovibrionales</taxon>
        <taxon>Desulfovibrionaceae</taxon>
        <taxon>Nitratidesulfovibrio</taxon>
    </lineage>
</organism>
<protein>
    <recommendedName>
        <fullName evidence="1">Putative regulatory protein Dvul_2085</fullName>
    </recommendedName>
</protein>
<dbReference type="EMBL" id="CP000527">
    <property type="protein sequence ID" value="ABM29101.1"/>
    <property type="molecule type" value="Genomic_DNA"/>
</dbReference>
<dbReference type="RefSeq" id="WP_010938198.1">
    <property type="nucleotide sequence ID" value="NC_008751.1"/>
</dbReference>
<dbReference type="SMR" id="A1VF85"/>
<dbReference type="KEGG" id="dvl:Dvul_2085"/>
<dbReference type="HOGENOM" id="CLU_165326_2_1_7"/>
<dbReference type="Proteomes" id="UP000009173">
    <property type="component" value="Chromosome"/>
</dbReference>
<dbReference type="HAMAP" id="MF_01503">
    <property type="entry name" value="RemA"/>
    <property type="match status" value="1"/>
</dbReference>
<dbReference type="InterPro" id="IPR007169">
    <property type="entry name" value="RemA-like"/>
</dbReference>
<dbReference type="NCBIfam" id="NF003315">
    <property type="entry name" value="PRK04323.1"/>
    <property type="match status" value="1"/>
</dbReference>
<dbReference type="PANTHER" id="PTHR38449:SF1">
    <property type="entry name" value="REGULATORY PROTEIN SSL2874-RELATED"/>
    <property type="match status" value="1"/>
</dbReference>
<dbReference type="PANTHER" id="PTHR38449">
    <property type="entry name" value="REGULATORY PROTEIN TM_1690-RELATED"/>
    <property type="match status" value="1"/>
</dbReference>
<dbReference type="Pfam" id="PF04025">
    <property type="entry name" value="RemA-like"/>
    <property type="match status" value="1"/>
</dbReference>
<gene>
    <name type="ordered locus">Dvul_2085</name>
</gene>
<accession>A1VF85</accession>
<reference key="1">
    <citation type="journal article" date="2009" name="Environ. Microbiol.">
        <title>Contribution of mobile genetic elements to Desulfovibrio vulgaris genome plasticity.</title>
        <authorList>
            <person name="Walker C.B."/>
            <person name="Stolyar S."/>
            <person name="Chivian D."/>
            <person name="Pinel N."/>
            <person name="Gabster J.A."/>
            <person name="Dehal P.S."/>
            <person name="He Z."/>
            <person name="Yang Z.K."/>
            <person name="Yen H.C."/>
            <person name="Zhou J."/>
            <person name="Wall J.D."/>
            <person name="Hazen T.C."/>
            <person name="Arkin A.P."/>
            <person name="Stahl D.A."/>
        </authorList>
    </citation>
    <scope>NUCLEOTIDE SEQUENCE [LARGE SCALE GENOMIC DNA]</scope>
    <source>
        <strain>DP4</strain>
    </source>
</reference>
<evidence type="ECO:0000255" key="1">
    <source>
        <dbReference type="HAMAP-Rule" id="MF_01503"/>
    </source>
</evidence>
<name>Y2085_NITV4</name>
<sequence length="86" mass="9664">MTMQGNKLVNLGFGNFVVASRVVSIVDPDSSPMRRLREDARDQGRLIDVTQGRKTRSIIITDSNHVILSAIQTETMGQRFTQEDED</sequence>
<proteinExistence type="inferred from homology"/>
<comment type="similarity">
    <text evidence="1">Belongs to the RemA family.</text>
</comment>